<evidence type="ECO:0000255" key="1">
    <source>
        <dbReference type="HAMAP-Rule" id="MF_01342"/>
    </source>
</evidence>
<evidence type="ECO:0000305" key="2"/>
<sequence>MLQPKRTKYRKPHNVSYEGHTKGNGYVAFGEYGIVATKGNWIDARAIESARVAISKCLGKTGKMWIRIFPHMSKTKKPLEVRMGSGKGNPEFWVAVVKKGTVMFEVANIPEQQMIKALTRAGHKLPVTWKLMKREENS</sequence>
<name>RL16_MYCGE</name>
<organism>
    <name type="scientific">Mycoplasma genitalium (strain ATCC 33530 / DSM 19775 / NCTC 10195 / G37)</name>
    <name type="common">Mycoplasmoides genitalium</name>
    <dbReference type="NCBI Taxonomy" id="243273"/>
    <lineage>
        <taxon>Bacteria</taxon>
        <taxon>Bacillati</taxon>
        <taxon>Mycoplasmatota</taxon>
        <taxon>Mycoplasmoidales</taxon>
        <taxon>Mycoplasmoidaceae</taxon>
        <taxon>Mycoplasmoides</taxon>
    </lineage>
</organism>
<keyword id="KW-1185">Reference proteome</keyword>
<keyword id="KW-0687">Ribonucleoprotein</keyword>
<keyword id="KW-0689">Ribosomal protein</keyword>
<keyword id="KW-0694">RNA-binding</keyword>
<keyword id="KW-0699">rRNA-binding</keyword>
<keyword id="KW-0820">tRNA-binding</keyword>
<reference key="1">
    <citation type="journal article" date="1995" name="Science">
        <title>The minimal gene complement of Mycoplasma genitalium.</title>
        <authorList>
            <person name="Fraser C.M."/>
            <person name="Gocayne J.D."/>
            <person name="White O."/>
            <person name="Adams M.D."/>
            <person name="Clayton R.A."/>
            <person name="Fleischmann R.D."/>
            <person name="Bult C.J."/>
            <person name="Kerlavage A.R."/>
            <person name="Sutton G.G."/>
            <person name="Kelley J.M."/>
            <person name="Fritchman J.L."/>
            <person name="Weidman J.F."/>
            <person name="Small K.V."/>
            <person name="Sandusky M."/>
            <person name="Fuhrmann J.L."/>
            <person name="Nguyen D.T."/>
            <person name="Utterback T.R."/>
            <person name="Saudek D.M."/>
            <person name="Phillips C.A."/>
            <person name="Merrick J.M."/>
            <person name="Tomb J.-F."/>
            <person name="Dougherty B.A."/>
            <person name="Bott K.F."/>
            <person name="Hu P.-C."/>
            <person name="Lucier T.S."/>
            <person name="Peterson S.N."/>
            <person name="Smith H.O."/>
            <person name="Hutchison C.A. III"/>
            <person name="Venter J.C."/>
        </authorList>
    </citation>
    <scope>NUCLEOTIDE SEQUENCE [LARGE SCALE GENOMIC DNA]</scope>
    <source>
        <strain>ATCC 33530 / DSM 19775 / NCTC 10195 / G37</strain>
    </source>
</reference>
<comment type="function">
    <text evidence="1">Binds 23S rRNA and is also seen to make contacts with the A and possibly P site tRNAs.</text>
</comment>
<comment type="subunit">
    <text evidence="1">Part of the 50S ribosomal subunit.</text>
</comment>
<comment type="similarity">
    <text evidence="1">Belongs to the universal ribosomal protein uL16 family.</text>
</comment>
<proteinExistence type="inferred from homology"/>
<feature type="chain" id="PRO_0000062141" description="Large ribosomal subunit protein uL16">
    <location>
        <begin position="1"/>
        <end position="138"/>
    </location>
</feature>
<gene>
    <name evidence="1" type="primary">rplP</name>
    <name evidence="1" type="synonym">rpl16</name>
    <name type="ordered locus">MG158</name>
</gene>
<dbReference type="EMBL" id="L43967">
    <property type="protein sequence ID" value="AAC71376.1"/>
    <property type="molecule type" value="Genomic_DNA"/>
</dbReference>
<dbReference type="PIR" id="E64217">
    <property type="entry name" value="E64217"/>
</dbReference>
<dbReference type="RefSeq" id="WP_009885842.1">
    <property type="nucleotide sequence ID" value="NC_000908.2"/>
</dbReference>
<dbReference type="SMR" id="P47404"/>
<dbReference type="FunCoup" id="P47404">
    <property type="interactions" value="197"/>
</dbReference>
<dbReference type="STRING" id="243273.MG_158"/>
<dbReference type="GeneID" id="88282291"/>
<dbReference type="KEGG" id="mge:MG_158"/>
<dbReference type="eggNOG" id="COG0197">
    <property type="taxonomic scope" value="Bacteria"/>
</dbReference>
<dbReference type="HOGENOM" id="CLU_078858_2_1_14"/>
<dbReference type="InParanoid" id="P47404"/>
<dbReference type="OrthoDB" id="9802589at2"/>
<dbReference type="BioCyc" id="MGEN243273:G1GJ2-182-MONOMER"/>
<dbReference type="Proteomes" id="UP000000807">
    <property type="component" value="Chromosome"/>
</dbReference>
<dbReference type="GO" id="GO:0022625">
    <property type="term" value="C:cytosolic large ribosomal subunit"/>
    <property type="evidence" value="ECO:0000318"/>
    <property type="project" value="GO_Central"/>
</dbReference>
<dbReference type="GO" id="GO:0019843">
    <property type="term" value="F:rRNA binding"/>
    <property type="evidence" value="ECO:0000318"/>
    <property type="project" value="GO_Central"/>
</dbReference>
<dbReference type="GO" id="GO:0003735">
    <property type="term" value="F:structural constituent of ribosome"/>
    <property type="evidence" value="ECO:0000318"/>
    <property type="project" value="GO_Central"/>
</dbReference>
<dbReference type="GO" id="GO:0000049">
    <property type="term" value="F:tRNA binding"/>
    <property type="evidence" value="ECO:0007669"/>
    <property type="project" value="UniProtKB-KW"/>
</dbReference>
<dbReference type="GO" id="GO:0006412">
    <property type="term" value="P:translation"/>
    <property type="evidence" value="ECO:0007669"/>
    <property type="project" value="UniProtKB-UniRule"/>
</dbReference>
<dbReference type="CDD" id="cd01433">
    <property type="entry name" value="Ribosomal_L16_L10e"/>
    <property type="match status" value="1"/>
</dbReference>
<dbReference type="FunFam" id="3.90.1170.10:FF:000001">
    <property type="entry name" value="50S ribosomal protein L16"/>
    <property type="match status" value="1"/>
</dbReference>
<dbReference type="Gene3D" id="3.90.1170.10">
    <property type="entry name" value="Ribosomal protein L10e/L16"/>
    <property type="match status" value="1"/>
</dbReference>
<dbReference type="HAMAP" id="MF_01342">
    <property type="entry name" value="Ribosomal_uL16"/>
    <property type="match status" value="1"/>
</dbReference>
<dbReference type="InterPro" id="IPR047873">
    <property type="entry name" value="Ribosomal_uL16"/>
</dbReference>
<dbReference type="InterPro" id="IPR000114">
    <property type="entry name" value="Ribosomal_uL16_bact-type"/>
</dbReference>
<dbReference type="InterPro" id="IPR020798">
    <property type="entry name" value="Ribosomal_uL16_CS"/>
</dbReference>
<dbReference type="InterPro" id="IPR016180">
    <property type="entry name" value="Ribosomal_uL16_dom"/>
</dbReference>
<dbReference type="InterPro" id="IPR036920">
    <property type="entry name" value="Ribosomal_uL16_sf"/>
</dbReference>
<dbReference type="NCBIfam" id="TIGR01164">
    <property type="entry name" value="rplP_bact"/>
    <property type="match status" value="1"/>
</dbReference>
<dbReference type="PANTHER" id="PTHR12220">
    <property type="entry name" value="50S/60S RIBOSOMAL PROTEIN L16"/>
    <property type="match status" value="1"/>
</dbReference>
<dbReference type="PANTHER" id="PTHR12220:SF13">
    <property type="entry name" value="LARGE RIBOSOMAL SUBUNIT PROTEIN UL16M"/>
    <property type="match status" value="1"/>
</dbReference>
<dbReference type="Pfam" id="PF00252">
    <property type="entry name" value="Ribosomal_L16"/>
    <property type="match status" value="1"/>
</dbReference>
<dbReference type="PRINTS" id="PR00060">
    <property type="entry name" value="RIBOSOMALL16"/>
</dbReference>
<dbReference type="SUPFAM" id="SSF54686">
    <property type="entry name" value="Ribosomal protein L16p/L10e"/>
    <property type="match status" value="1"/>
</dbReference>
<dbReference type="PROSITE" id="PS00586">
    <property type="entry name" value="RIBOSOMAL_L16_1"/>
    <property type="match status" value="1"/>
</dbReference>
<dbReference type="PROSITE" id="PS00701">
    <property type="entry name" value="RIBOSOMAL_L16_2"/>
    <property type="match status" value="1"/>
</dbReference>
<accession>P47404</accession>
<protein>
    <recommendedName>
        <fullName evidence="1">Large ribosomal subunit protein uL16</fullName>
    </recommendedName>
    <alternativeName>
        <fullName evidence="2">50S ribosomal protein L16</fullName>
    </alternativeName>
</protein>